<sequence>MIALHFGAGNIGRGFIGALLHHSGYDVVFADVNETMVSLLNEKKEYTVELADGGRQTEIIGPVSAINSAVQEQKLYRLINEAAIITTAVGPNVLRLIAPSIAEGLKRRTSSEPLNIIACENMIGGSSFLKKAVFGHLTEAERELVNRTVGFPDSAVDRIVPIQHHEDPLKVSVEPFFEWVIDRTGFAGGQPVLKGALFTDDLTPFIERKLFTVNTGHAVTAYVGYQRGLKTVKEAIGHPEIRRVVYDALSETGEYLVKAYGFKQSEHEQYMKKIIGRFENEYITDDVTRVARSPLRKLGANDRLVGPAKKIKEPNALAEGIAAALRFDYQDDPEAVELQKLIAEKGTSRVLQDICGIQLHEPLHGIVLKKLNQ</sequence>
<organism>
    <name type="scientific">Bacillus velezensis (strain DSM 23117 / BGSC 10A6 / LMG 26770 / FZB42)</name>
    <name type="common">Bacillus amyloliquefaciens subsp. plantarum</name>
    <dbReference type="NCBI Taxonomy" id="326423"/>
    <lineage>
        <taxon>Bacteria</taxon>
        <taxon>Bacillati</taxon>
        <taxon>Bacillota</taxon>
        <taxon>Bacilli</taxon>
        <taxon>Bacillales</taxon>
        <taxon>Bacillaceae</taxon>
        <taxon>Bacillus</taxon>
        <taxon>Bacillus amyloliquefaciens group</taxon>
    </lineage>
</organism>
<dbReference type="EC" id="1.1.1.17" evidence="1"/>
<dbReference type="EMBL" id="CP000560">
    <property type="protein sequence ID" value="ABS72824.1"/>
    <property type="molecule type" value="Genomic_DNA"/>
</dbReference>
<dbReference type="RefSeq" id="WP_012116818.1">
    <property type="nucleotide sequence ID" value="NC_009725.2"/>
</dbReference>
<dbReference type="SMR" id="A7Z1E8"/>
<dbReference type="GeneID" id="93079561"/>
<dbReference type="KEGG" id="bay:RBAM_004250"/>
<dbReference type="HOGENOM" id="CLU_036089_2_0_9"/>
<dbReference type="Proteomes" id="UP000001120">
    <property type="component" value="Chromosome"/>
</dbReference>
<dbReference type="GO" id="GO:0005829">
    <property type="term" value="C:cytosol"/>
    <property type="evidence" value="ECO:0007669"/>
    <property type="project" value="TreeGrafter"/>
</dbReference>
<dbReference type="GO" id="GO:0008926">
    <property type="term" value="F:mannitol-1-phosphate 5-dehydrogenase activity"/>
    <property type="evidence" value="ECO:0007669"/>
    <property type="project" value="UniProtKB-UniRule"/>
</dbReference>
<dbReference type="GO" id="GO:0019592">
    <property type="term" value="P:mannitol catabolic process"/>
    <property type="evidence" value="ECO:0007669"/>
    <property type="project" value="TreeGrafter"/>
</dbReference>
<dbReference type="Gene3D" id="1.10.1040.10">
    <property type="entry name" value="N-(1-d-carboxylethyl)-l-norvaline Dehydrogenase, domain 2"/>
    <property type="match status" value="1"/>
</dbReference>
<dbReference type="Gene3D" id="3.40.50.720">
    <property type="entry name" value="NAD(P)-binding Rossmann-like Domain"/>
    <property type="match status" value="1"/>
</dbReference>
<dbReference type="HAMAP" id="MF_00196">
    <property type="entry name" value="Mannitol_dehydrog"/>
    <property type="match status" value="1"/>
</dbReference>
<dbReference type="InterPro" id="IPR008927">
    <property type="entry name" value="6-PGluconate_DH-like_C_sf"/>
</dbReference>
<dbReference type="InterPro" id="IPR013328">
    <property type="entry name" value="6PGD_dom2"/>
</dbReference>
<dbReference type="InterPro" id="IPR023028">
    <property type="entry name" value="Mannitol_1_phos_5_DH"/>
</dbReference>
<dbReference type="InterPro" id="IPR000669">
    <property type="entry name" value="Mannitol_DH"/>
</dbReference>
<dbReference type="InterPro" id="IPR013118">
    <property type="entry name" value="Mannitol_DH_C"/>
</dbReference>
<dbReference type="InterPro" id="IPR023027">
    <property type="entry name" value="Mannitol_DH_CS"/>
</dbReference>
<dbReference type="InterPro" id="IPR013131">
    <property type="entry name" value="Mannitol_DH_N"/>
</dbReference>
<dbReference type="InterPro" id="IPR036291">
    <property type="entry name" value="NAD(P)-bd_dom_sf"/>
</dbReference>
<dbReference type="NCBIfam" id="NF002646">
    <property type="entry name" value="PRK02318.1-2"/>
    <property type="match status" value="1"/>
</dbReference>
<dbReference type="NCBIfam" id="NF002647">
    <property type="entry name" value="PRK02318.1-3"/>
    <property type="match status" value="1"/>
</dbReference>
<dbReference type="NCBIfam" id="NF002649">
    <property type="entry name" value="PRK02318.2-1"/>
    <property type="match status" value="1"/>
</dbReference>
<dbReference type="NCBIfam" id="NF002652">
    <property type="entry name" value="PRK02318.2-5"/>
    <property type="match status" value="1"/>
</dbReference>
<dbReference type="PANTHER" id="PTHR30524:SF0">
    <property type="entry name" value="ALTRONATE OXIDOREDUCTASE-RELATED"/>
    <property type="match status" value="1"/>
</dbReference>
<dbReference type="PANTHER" id="PTHR30524">
    <property type="entry name" value="MANNITOL-1-PHOSPHATE 5-DEHYDROGENASE"/>
    <property type="match status" value="1"/>
</dbReference>
<dbReference type="Pfam" id="PF01232">
    <property type="entry name" value="Mannitol_dh"/>
    <property type="match status" value="1"/>
</dbReference>
<dbReference type="Pfam" id="PF08125">
    <property type="entry name" value="Mannitol_dh_C"/>
    <property type="match status" value="1"/>
</dbReference>
<dbReference type="PRINTS" id="PR00084">
    <property type="entry name" value="MTLDHDRGNASE"/>
</dbReference>
<dbReference type="SUPFAM" id="SSF48179">
    <property type="entry name" value="6-phosphogluconate dehydrogenase C-terminal domain-like"/>
    <property type="match status" value="1"/>
</dbReference>
<dbReference type="SUPFAM" id="SSF51735">
    <property type="entry name" value="NAD(P)-binding Rossmann-fold domains"/>
    <property type="match status" value="1"/>
</dbReference>
<dbReference type="PROSITE" id="PS00974">
    <property type="entry name" value="MANNITOL_DHGENASE"/>
    <property type="match status" value="1"/>
</dbReference>
<accession>A7Z1E8</accession>
<keyword id="KW-0520">NAD</keyword>
<keyword id="KW-0560">Oxidoreductase</keyword>
<evidence type="ECO:0000255" key="1">
    <source>
        <dbReference type="HAMAP-Rule" id="MF_00196"/>
    </source>
</evidence>
<comment type="catalytic activity">
    <reaction evidence="1">
        <text>D-mannitol 1-phosphate + NAD(+) = beta-D-fructose 6-phosphate + NADH + H(+)</text>
        <dbReference type="Rhea" id="RHEA:19661"/>
        <dbReference type="ChEBI" id="CHEBI:15378"/>
        <dbReference type="ChEBI" id="CHEBI:57540"/>
        <dbReference type="ChEBI" id="CHEBI:57634"/>
        <dbReference type="ChEBI" id="CHEBI:57945"/>
        <dbReference type="ChEBI" id="CHEBI:61381"/>
        <dbReference type="EC" id="1.1.1.17"/>
    </reaction>
</comment>
<comment type="similarity">
    <text evidence="1">Belongs to the mannitol dehydrogenase family.</text>
</comment>
<feature type="chain" id="PRO_1000011794" description="Mannitol-1-phosphate 5-dehydrogenase">
    <location>
        <begin position="1"/>
        <end position="373"/>
    </location>
</feature>
<feature type="binding site" evidence="1">
    <location>
        <begin position="3"/>
        <end position="14"/>
    </location>
    <ligand>
        <name>NAD(+)</name>
        <dbReference type="ChEBI" id="CHEBI:57540"/>
    </ligand>
</feature>
<reference key="1">
    <citation type="journal article" date="2007" name="Nat. Biotechnol.">
        <title>Comparative analysis of the complete genome sequence of the plant growth-promoting bacterium Bacillus amyloliquefaciens FZB42.</title>
        <authorList>
            <person name="Chen X.H."/>
            <person name="Koumoutsi A."/>
            <person name="Scholz R."/>
            <person name="Eisenreich A."/>
            <person name="Schneider K."/>
            <person name="Heinemeyer I."/>
            <person name="Morgenstern B."/>
            <person name="Voss B."/>
            <person name="Hess W.R."/>
            <person name="Reva O."/>
            <person name="Junge H."/>
            <person name="Voigt B."/>
            <person name="Jungblut P.R."/>
            <person name="Vater J."/>
            <person name="Suessmuth R."/>
            <person name="Liesegang H."/>
            <person name="Strittmatter A."/>
            <person name="Gottschalk G."/>
            <person name="Borriss R."/>
        </authorList>
    </citation>
    <scope>NUCLEOTIDE SEQUENCE [LARGE SCALE GENOMIC DNA]</scope>
    <source>
        <strain>DSM 23117 / BGSC 10A6 / LMG 26770 / FZB42</strain>
    </source>
</reference>
<protein>
    <recommendedName>
        <fullName evidence="1">Mannitol-1-phosphate 5-dehydrogenase</fullName>
        <ecNumber evidence="1">1.1.1.17</ecNumber>
    </recommendedName>
</protein>
<proteinExistence type="inferred from homology"/>
<gene>
    <name evidence="1" type="primary">mtlD</name>
    <name type="ordered locus">RBAM_004250</name>
</gene>
<name>MTLD_BACVZ</name>